<proteinExistence type="inferred from homology"/>
<comment type="function">
    <text evidence="2">Photosystem II (PSII) is a light-driven water:plastoquinone oxidoreductase that uses light energy to abstract electrons from H(2)O, generating O(2) and a proton gradient subsequently used for ATP formation. It consists of a core antenna complex that captures photons, and an electron transfer chain that converts photonic excitation into a charge separation. The D1/D2 (PsbA/PsbD) reaction center heterodimer binds P680, the primary electron donor of PSII as well as several subsequent electron acceptors. D2 is needed for assembly of a stable PSII complex.</text>
</comment>
<comment type="catalytic activity">
    <reaction evidence="2">
        <text>2 a plastoquinone + 4 hnu + 2 H2O = 2 a plastoquinol + O2</text>
        <dbReference type="Rhea" id="RHEA:36359"/>
        <dbReference type="Rhea" id="RHEA-COMP:9561"/>
        <dbReference type="Rhea" id="RHEA-COMP:9562"/>
        <dbReference type="ChEBI" id="CHEBI:15377"/>
        <dbReference type="ChEBI" id="CHEBI:15379"/>
        <dbReference type="ChEBI" id="CHEBI:17757"/>
        <dbReference type="ChEBI" id="CHEBI:30212"/>
        <dbReference type="ChEBI" id="CHEBI:62192"/>
        <dbReference type="EC" id="1.10.3.9"/>
    </reaction>
</comment>
<comment type="cofactor">
    <text evidence="2">The D1/D2 heterodimer binds P680, chlorophylls that are the primary electron donor of PSII, and subsequent electron acceptors. It shares a non-heme iron and each subunit binds pheophytin, quinone, additional chlorophylls, carotenoids and lipids. There is also a Cl(-1) ion associated with D1 and D2, which is required for oxygen evolution. The PSII complex binds additional chlorophylls, carotenoids and specific lipids.</text>
</comment>
<comment type="subunit">
    <text evidence="2">PSII is composed of 1 copy each of membrane proteins PsbA, PsbB, PsbC, PsbD, PsbE, PsbF, PsbH, PsbI, PsbJ, PsbK, PsbL, PsbM, PsbT, PsbX, PsbY, PsbZ, Psb30/Ycf12, at least 3 peripheral proteins of the oxygen-evolving complex and a large number of cofactors. It forms dimeric complexes.</text>
</comment>
<comment type="subcellular location">
    <subcellularLocation>
        <location evidence="2">Plastid</location>
        <location evidence="2">Chloroplast thylakoid membrane</location>
        <topology evidence="2">Multi-pass membrane protein</topology>
    </subcellularLocation>
</comment>
<comment type="miscellaneous">
    <text evidence="2">2 of the reaction center chlorophylls (ChlD1 and ChlD2) are entirely coordinated by water.</text>
</comment>
<comment type="similarity">
    <text evidence="2">Belongs to the reaction center PufL/M/PsbA/D family.</text>
</comment>
<geneLocation type="chloroplast"/>
<keyword id="KW-0007">Acetylation</keyword>
<keyword id="KW-0148">Chlorophyll</keyword>
<keyword id="KW-0150">Chloroplast</keyword>
<keyword id="KW-0157">Chromophore</keyword>
<keyword id="KW-0249">Electron transport</keyword>
<keyword id="KW-0408">Iron</keyword>
<keyword id="KW-0460">Magnesium</keyword>
<keyword id="KW-0472">Membrane</keyword>
<keyword id="KW-0479">Metal-binding</keyword>
<keyword id="KW-0560">Oxidoreductase</keyword>
<keyword id="KW-0597">Phosphoprotein</keyword>
<keyword id="KW-0602">Photosynthesis</keyword>
<keyword id="KW-0604">Photosystem II</keyword>
<keyword id="KW-0934">Plastid</keyword>
<keyword id="KW-0793">Thylakoid</keyword>
<keyword id="KW-0812">Transmembrane</keyword>
<keyword id="KW-1133">Transmembrane helix</keyword>
<keyword id="KW-0813">Transport</keyword>
<sequence length="353" mass="39636">MTITLGRFTKEENDLFDIMDDWLRRDRFVFVGWSGLLLFPCAYFALGGWFTGTTFVTSWYTHGLASSYLEGCNFLTAAVSTPANSLAHSLLLLWGPEAQGDFTRWCQLGGLWTFVALHGAFGLIGFMLRQFELARSVQLRPYNAIAFSAPIAVFVSVFLIYPLGQSGWFFAPSFGVAAIFRFILFFQGFHNWTLNPFHMMGVAGVLGAALLCAIHGATVENTLFEDGDGANTFRAFNPTQAEETYSMVTANRFWSQIFGVAFSNKRWLHFFMLFVPVTGLWMSALGVVGLALNLRAYDFVSQEIRAAEDPEFETFYTKNILLNEGIRAWMAAQDQPHENLIFPEEVLPRGNAL</sequence>
<organism>
    <name type="scientific">Chloranthus spicatus</name>
    <name type="common">Chulantree</name>
    <name type="synonym">Nigrina spicata</name>
    <dbReference type="NCBI Taxonomy" id="13006"/>
    <lineage>
        <taxon>Eukaryota</taxon>
        <taxon>Viridiplantae</taxon>
        <taxon>Streptophyta</taxon>
        <taxon>Embryophyta</taxon>
        <taxon>Tracheophyta</taxon>
        <taxon>Spermatophyta</taxon>
        <taxon>Magnoliopsida</taxon>
        <taxon>Chloranthales</taxon>
        <taxon>Chloranthaceae</taxon>
        <taxon>Chloranthus</taxon>
    </lineage>
</organism>
<protein>
    <recommendedName>
        <fullName evidence="2">Photosystem II D2 protein</fullName>
        <shortName evidence="2">PSII D2 protein</shortName>
        <ecNumber evidence="2">1.10.3.9</ecNumber>
    </recommendedName>
    <alternativeName>
        <fullName evidence="2">Photosystem Q(A) protein</fullName>
    </alternativeName>
</protein>
<evidence type="ECO:0000250" key="1">
    <source>
        <dbReference type="UniProtKB" id="P56761"/>
    </source>
</evidence>
<evidence type="ECO:0000255" key="2">
    <source>
        <dbReference type="HAMAP-Rule" id="MF_01383"/>
    </source>
</evidence>
<gene>
    <name evidence="2" type="primary">psbD</name>
</gene>
<name>PSBD_CHLSC</name>
<reference key="1">
    <citation type="journal article" date="2007" name="Mol. Phylogenet. Evol.">
        <title>Phylogenetic and evolutionary implications of complete chloroplast genome sequences of four early-diverging angiosperms: Buxus (Buxaceae), Chloranthus (Chloranthaceae), Dioscorea (Dioscoreaceae), and Illicium (Schisandraceae).</title>
        <authorList>
            <person name="Hansen D.R."/>
            <person name="Dastidar S.G."/>
            <person name="Cai Z."/>
            <person name="Penaflor C."/>
            <person name="Kuehl J.V."/>
            <person name="Boore J.L."/>
            <person name="Jansen R.K."/>
        </authorList>
    </citation>
    <scope>NUCLEOTIDE SEQUENCE [LARGE SCALE GENOMIC DNA]</scope>
</reference>
<dbReference type="EC" id="1.10.3.9" evidence="2"/>
<dbReference type="EMBL" id="EF380352">
    <property type="protein sequence ID" value="ABQ43255.1"/>
    <property type="molecule type" value="Genomic_DNA"/>
</dbReference>
<dbReference type="RefSeq" id="YP_001294093.1">
    <property type="nucleotide sequence ID" value="NC_009598.1"/>
</dbReference>
<dbReference type="SMR" id="A6MMB7"/>
<dbReference type="GeneID" id="5236429"/>
<dbReference type="GO" id="GO:0009535">
    <property type="term" value="C:chloroplast thylakoid membrane"/>
    <property type="evidence" value="ECO:0007669"/>
    <property type="project" value="UniProtKB-SubCell"/>
</dbReference>
<dbReference type="GO" id="GO:0009523">
    <property type="term" value="C:photosystem II"/>
    <property type="evidence" value="ECO:0007669"/>
    <property type="project" value="UniProtKB-KW"/>
</dbReference>
<dbReference type="GO" id="GO:0016168">
    <property type="term" value="F:chlorophyll binding"/>
    <property type="evidence" value="ECO:0007669"/>
    <property type="project" value="UniProtKB-UniRule"/>
</dbReference>
<dbReference type="GO" id="GO:0045156">
    <property type="term" value="F:electron transporter, transferring electrons within the cyclic electron transport pathway of photosynthesis activity"/>
    <property type="evidence" value="ECO:0007669"/>
    <property type="project" value="InterPro"/>
</dbReference>
<dbReference type="GO" id="GO:0005506">
    <property type="term" value="F:iron ion binding"/>
    <property type="evidence" value="ECO:0007669"/>
    <property type="project" value="UniProtKB-UniRule"/>
</dbReference>
<dbReference type="GO" id="GO:0010242">
    <property type="term" value="F:oxygen evolving activity"/>
    <property type="evidence" value="ECO:0007669"/>
    <property type="project" value="UniProtKB-EC"/>
</dbReference>
<dbReference type="GO" id="GO:0009772">
    <property type="term" value="P:photosynthetic electron transport in photosystem II"/>
    <property type="evidence" value="ECO:0007669"/>
    <property type="project" value="InterPro"/>
</dbReference>
<dbReference type="CDD" id="cd09288">
    <property type="entry name" value="Photosystem-II_D2"/>
    <property type="match status" value="1"/>
</dbReference>
<dbReference type="FunFam" id="1.20.85.10:FF:000001">
    <property type="entry name" value="photosystem II D2 protein-like"/>
    <property type="match status" value="1"/>
</dbReference>
<dbReference type="Gene3D" id="1.20.85.10">
    <property type="entry name" value="Photosystem II protein D1-like"/>
    <property type="match status" value="1"/>
</dbReference>
<dbReference type="HAMAP" id="MF_01383">
    <property type="entry name" value="PSII_PsbD_D2"/>
    <property type="match status" value="1"/>
</dbReference>
<dbReference type="InterPro" id="IPR055266">
    <property type="entry name" value="D1/D2"/>
</dbReference>
<dbReference type="InterPro" id="IPR036854">
    <property type="entry name" value="Photo_II_D1/D2_sf"/>
</dbReference>
<dbReference type="InterPro" id="IPR000484">
    <property type="entry name" value="Photo_RC_L/M"/>
</dbReference>
<dbReference type="InterPro" id="IPR055265">
    <property type="entry name" value="Photo_RC_L/M_CS"/>
</dbReference>
<dbReference type="InterPro" id="IPR005868">
    <property type="entry name" value="PSII_PsbD/D2"/>
</dbReference>
<dbReference type="NCBIfam" id="TIGR01152">
    <property type="entry name" value="psbD"/>
    <property type="match status" value="1"/>
</dbReference>
<dbReference type="PANTHER" id="PTHR33149:SF12">
    <property type="entry name" value="PHOTOSYSTEM II D2 PROTEIN"/>
    <property type="match status" value="1"/>
</dbReference>
<dbReference type="PANTHER" id="PTHR33149">
    <property type="entry name" value="PHOTOSYSTEM II PROTEIN D1"/>
    <property type="match status" value="1"/>
</dbReference>
<dbReference type="Pfam" id="PF00124">
    <property type="entry name" value="Photo_RC"/>
    <property type="match status" value="1"/>
</dbReference>
<dbReference type="PRINTS" id="PR00256">
    <property type="entry name" value="REACTNCENTRE"/>
</dbReference>
<dbReference type="SUPFAM" id="SSF81483">
    <property type="entry name" value="Bacterial photosystem II reaction centre, L and M subunits"/>
    <property type="match status" value="1"/>
</dbReference>
<dbReference type="PROSITE" id="PS00244">
    <property type="entry name" value="REACTION_CENTER"/>
    <property type="match status" value="1"/>
</dbReference>
<feature type="initiator methionine" description="Removed" evidence="1">
    <location>
        <position position="1"/>
    </location>
</feature>
<feature type="chain" id="PRO_0000359633" description="Photosystem II D2 protein">
    <location>
        <begin position="2"/>
        <end position="353"/>
    </location>
</feature>
<feature type="transmembrane region" description="Helical" evidence="2">
    <location>
        <begin position="41"/>
        <end position="61"/>
    </location>
</feature>
<feature type="transmembrane region" description="Helical" evidence="2">
    <location>
        <begin position="125"/>
        <end position="141"/>
    </location>
</feature>
<feature type="transmembrane region" description="Helical" evidence="2">
    <location>
        <begin position="153"/>
        <end position="166"/>
    </location>
</feature>
<feature type="transmembrane region" description="Helical" evidence="2">
    <location>
        <begin position="208"/>
        <end position="228"/>
    </location>
</feature>
<feature type="transmembrane region" description="Helical" evidence="2">
    <location>
        <begin position="279"/>
        <end position="295"/>
    </location>
</feature>
<feature type="binding site" description="axial binding residue" evidence="2">
    <location>
        <position position="118"/>
    </location>
    <ligand>
        <name>chlorophyll a</name>
        <dbReference type="ChEBI" id="CHEBI:58416"/>
        <label>ChlzD2</label>
    </ligand>
    <ligandPart>
        <name>Mg</name>
        <dbReference type="ChEBI" id="CHEBI:25107"/>
    </ligandPart>
</feature>
<feature type="binding site" evidence="2">
    <location>
        <position position="130"/>
    </location>
    <ligand>
        <name>pheophytin a</name>
        <dbReference type="ChEBI" id="CHEBI:136840"/>
        <label>D2</label>
    </ligand>
</feature>
<feature type="binding site" evidence="2">
    <location>
        <position position="143"/>
    </location>
    <ligand>
        <name>pheophytin a</name>
        <dbReference type="ChEBI" id="CHEBI:136840"/>
        <label>D2</label>
    </ligand>
</feature>
<feature type="binding site" description="axial binding residue" evidence="2">
    <location>
        <position position="198"/>
    </location>
    <ligand>
        <name>chlorophyll a</name>
        <dbReference type="ChEBI" id="CHEBI:58416"/>
        <label>PD2</label>
    </ligand>
    <ligandPart>
        <name>Mg</name>
        <dbReference type="ChEBI" id="CHEBI:25107"/>
    </ligandPart>
</feature>
<feature type="binding site" evidence="2">
    <location>
        <position position="215"/>
    </location>
    <ligand>
        <name>a plastoquinone</name>
        <dbReference type="ChEBI" id="CHEBI:17757"/>
        <label>Q(A)</label>
    </ligand>
</feature>
<feature type="binding site" evidence="2">
    <location>
        <position position="215"/>
    </location>
    <ligand>
        <name>Fe cation</name>
        <dbReference type="ChEBI" id="CHEBI:24875"/>
        <note>ligand shared with heterodimeric partner</note>
    </ligand>
</feature>
<feature type="binding site" evidence="2">
    <location>
        <position position="262"/>
    </location>
    <ligand>
        <name>a plastoquinone</name>
        <dbReference type="ChEBI" id="CHEBI:17757"/>
        <label>Q(A)</label>
    </ligand>
</feature>
<feature type="binding site" evidence="2">
    <location>
        <position position="269"/>
    </location>
    <ligand>
        <name>Fe cation</name>
        <dbReference type="ChEBI" id="CHEBI:24875"/>
        <note>ligand shared with heterodimeric partner</note>
    </ligand>
</feature>
<feature type="modified residue" description="N-acetylthreonine" evidence="1">
    <location>
        <position position="2"/>
    </location>
</feature>
<feature type="modified residue" description="Phosphothreonine" evidence="1">
    <location>
        <position position="2"/>
    </location>
</feature>
<accession>A6MMB7</accession>